<feature type="chain" id="PRO_0000324135" description="Golgi phosphoprotein 3-like">
    <location>
        <begin position="1"/>
        <end position="285"/>
    </location>
</feature>
<feature type="region of interest" description="Disordered" evidence="2">
    <location>
        <begin position="1"/>
        <end position="42"/>
    </location>
</feature>
<feature type="region of interest" description="Beta-hairpin required for oligomerization" evidence="1">
    <location>
        <begin position="176"/>
        <end position="187"/>
    </location>
</feature>
<feature type="compositionally biased region" description="Basic and acidic residues" evidence="2">
    <location>
        <begin position="10"/>
        <end position="42"/>
    </location>
</feature>
<feature type="binding site" evidence="1">
    <location>
        <position position="67"/>
    </location>
    <ligand>
        <name>a 1,2-diacyl-sn-glycero-3-phospho-(1D-myo-inositol 4-phosphate)</name>
        <dbReference type="ChEBI" id="CHEBI:58178"/>
    </ligand>
</feature>
<feature type="binding site" evidence="1">
    <location>
        <position position="76"/>
    </location>
    <ligand>
        <name>a 1,2-diacyl-sn-glycero-3-phospho-(1D-myo-inositol 4-phosphate)</name>
        <dbReference type="ChEBI" id="CHEBI:58178"/>
    </ligand>
</feature>
<feature type="binding site" evidence="1">
    <location>
        <position position="157"/>
    </location>
    <ligand>
        <name>a 1,2-diacyl-sn-glycero-3-phospho-(1D-myo-inositol 4-phosphate)</name>
        <dbReference type="ChEBI" id="CHEBI:58178"/>
    </ligand>
</feature>
<feature type="binding site" evidence="1">
    <location>
        <position position="160"/>
    </location>
    <ligand>
        <name>a 1,2-diacyl-sn-glycero-3-phospho-(1D-myo-inositol 4-phosphate)</name>
        <dbReference type="ChEBI" id="CHEBI:58178"/>
    </ligand>
</feature>
<feature type="modified residue" description="Phosphoserine" evidence="7">
    <location>
        <position position="112"/>
    </location>
</feature>
<feature type="splice variant" id="VSP_055229" description="In isoform 2." evidence="5">
    <location>
        <begin position="62"/>
        <end position="105"/>
    </location>
</feature>
<feature type="mutagenesis site" description="Loss of binding to coatomer." evidence="3">
    <original>RARR</original>
    <variation>AAAA</variation>
    <location>
        <begin position="7"/>
        <end position="10"/>
    </location>
</feature>
<feature type="sequence conflict" description="In Ref. 2; BAH13319." evidence="6" ref="2">
    <original>S</original>
    <variation>G</variation>
    <location>
        <position position="112"/>
    </location>
</feature>
<organism>
    <name type="scientific">Homo sapiens</name>
    <name type="common">Human</name>
    <dbReference type="NCBI Taxonomy" id="9606"/>
    <lineage>
        <taxon>Eukaryota</taxon>
        <taxon>Metazoa</taxon>
        <taxon>Chordata</taxon>
        <taxon>Craniata</taxon>
        <taxon>Vertebrata</taxon>
        <taxon>Euteleostomi</taxon>
        <taxon>Mammalia</taxon>
        <taxon>Eutheria</taxon>
        <taxon>Euarchontoglires</taxon>
        <taxon>Primates</taxon>
        <taxon>Haplorrhini</taxon>
        <taxon>Catarrhini</taxon>
        <taxon>Hominidae</taxon>
        <taxon>Homo</taxon>
    </lineage>
</organism>
<sequence length="285" mass="32767">MTTLTHRARRTEISKNSEKKMESEEDSNWEKSPDNEDSGDSKDIRLTLMEEVLLLGLKDKEGYTSFWNDCISSGLRGGILIELAMRGRIYLEPPTMRKKRLLDRKVLLKSDSPTGDVLLDETLKHIKATEPTETVQTWIELLTGETWNPFKLQYQLRNVRERIAKNLVEKGILTTEKQNFLLFDMTTHPVTNTTEKQRLVKKLQDSVLERWVNDPQRMDKRTLALLVLAHSSDVLENVFSSLTDDKYDVAMNRAKDLVELDPEVEGTKPSATEMIWAVLAAFNKS</sequence>
<comment type="function">
    <text evidence="4">Phosphatidylinositol-4-phosphate-binding protein that may antagonize the action of GOLPH3 which is required for the process of vesicle budding at the Golgi and anterograde transport to the plasma membrane.</text>
</comment>
<comment type="subunit">
    <text evidence="1">Homooligomer (By similarity). Does not interact MYO18; differs from GOLPH3 by its inability to interact with MYO18. May interact with ARF1.</text>
</comment>
<comment type="interaction">
    <interactant intactId="EBI-4403434">
        <id>Q9H4A5</id>
    </interactant>
    <interactant intactId="EBI-10968534">
        <id>P50570-2</id>
        <label>DNM2</label>
    </interactant>
    <organismsDiffer>false</organismsDiffer>
    <experiments>3</experiments>
</comment>
<comment type="interaction">
    <interactant intactId="EBI-4403434">
        <id>Q9H4A5</id>
    </interactant>
    <interactant intactId="EBI-466029">
        <id>P42858</id>
        <label>HTT</label>
    </interactant>
    <organismsDiffer>false</organismsDiffer>
    <experiments>20</experiments>
</comment>
<comment type="interaction">
    <interactant intactId="EBI-4403434">
        <id>Q9H4A5</id>
    </interactant>
    <interactant intactId="EBI-739832">
        <id>Q8TBB1</id>
        <label>LNX1</label>
    </interactant>
    <organismsDiffer>false</organismsDiffer>
    <experiments>3</experiments>
</comment>
<comment type="interaction">
    <interactant intactId="EBI-4403434">
        <id>Q9H4A5</id>
    </interactant>
    <interactant intactId="EBI-25847109">
        <id>O14656-2</id>
        <label>TOR1A</label>
    </interactant>
    <organismsDiffer>false</organismsDiffer>
    <experiments>3</experiments>
</comment>
<comment type="interaction">
    <interactant intactId="EBI-4403434">
        <id>Q9H4A5</id>
    </interactant>
    <interactant intactId="EBI-524753">
        <id>Q8IUH5</id>
        <label>ZDHHC17</label>
    </interactant>
    <organismsDiffer>false</organismsDiffer>
    <experiments>2</experiments>
</comment>
<comment type="subcellular location">
    <subcellularLocation>
        <location evidence="4">Golgi apparatus</location>
        <location evidence="4">Golgi stack membrane</location>
        <topology evidence="4">Peripheral membrane protein</topology>
        <orientation evidence="4">Cytoplasmic side</orientation>
    </subcellularLocation>
    <subcellularLocation>
        <location evidence="4">Golgi apparatus</location>
        <location evidence="4">trans-Golgi network membrane</location>
        <topology evidence="4">Peripheral membrane protein</topology>
        <orientation evidence="4">Cytoplasmic side</orientation>
    </subcellularLocation>
    <text>Phosphatidylinositol 4-phosphate (PtdIns4P)-binding mediates recruitment to Golgi membranes.</text>
</comment>
<comment type="alternative products">
    <event type="alternative splicing"/>
    <isoform>
        <id>Q9H4A5-1</id>
        <name>1</name>
        <sequence type="displayed"/>
    </isoform>
    <isoform>
        <id>Q9H4A5-2</id>
        <name>2</name>
        <sequence type="described" ref="VSP_055229"/>
    </isoform>
</comment>
<comment type="similarity">
    <text evidence="6">Belongs to the GOLPH3/VPS74 family.</text>
</comment>
<comment type="sequence caution" evidence="6">
    <conflict type="erroneous initiation">
        <sequence resource="EMBL-CDS" id="BAA91750"/>
    </conflict>
    <text>Truncated N-terminus.</text>
</comment>
<keyword id="KW-0025">Alternative splicing</keyword>
<keyword id="KW-0333">Golgi apparatus</keyword>
<keyword id="KW-0446">Lipid-binding</keyword>
<keyword id="KW-0472">Membrane</keyword>
<keyword id="KW-0597">Phosphoprotein</keyword>
<keyword id="KW-1267">Proteomics identification</keyword>
<keyword id="KW-1185">Reference proteome</keyword>
<evidence type="ECO:0000250" key="1"/>
<evidence type="ECO:0000256" key="2">
    <source>
        <dbReference type="SAM" id="MobiDB-lite"/>
    </source>
</evidence>
<evidence type="ECO:0000269" key="3">
    <source>
    </source>
</evidence>
<evidence type="ECO:0000269" key="4">
    <source>
    </source>
</evidence>
<evidence type="ECO:0000303" key="5">
    <source>
    </source>
</evidence>
<evidence type="ECO:0000305" key="6"/>
<evidence type="ECO:0007744" key="7">
    <source>
    </source>
</evidence>
<name>GLP3L_HUMAN</name>
<gene>
    <name type="primary">GOLPH3L</name>
    <name type="synonym">GPP34R</name>
</gene>
<proteinExistence type="evidence at protein level"/>
<dbReference type="EMBL" id="AJ296153">
    <property type="protein sequence ID" value="CAC13125.1"/>
    <property type="molecule type" value="mRNA"/>
</dbReference>
<dbReference type="EMBL" id="AK001549">
    <property type="protein sequence ID" value="BAA91750.1"/>
    <property type="status" value="ALT_INIT"/>
    <property type="molecule type" value="mRNA"/>
</dbReference>
<dbReference type="EMBL" id="AK300635">
    <property type="protein sequence ID" value="BAH13319.1"/>
    <property type="molecule type" value="mRNA"/>
</dbReference>
<dbReference type="EMBL" id="AK315594">
    <property type="protein sequence ID" value="BAG37966.1"/>
    <property type="molecule type" value="mRNA"/>
</dbReference>
<dbReference type="EMBL" id="AL356292">
    <property type="status" value="NOT_ANNOTATED_CDS"/>
    <property type="molecule type" value="Genomic_DNA"/>
</dbReference>
<dbReference type="EMBL" id="AL356356">
    <property type="status" value="NOT_ANNOTATED_CDS"/>
    <property type="molecule type" value="Genomic_DNA"/>
</dbReference>
<dbReference type="EMBL" id="CH471121">
    <property type="protein sequence ID" value="EAW53526.1"/>
    <property type="molecule type" value="Genomic_DNA"/>
</dbReference>
<dbReference type="EMBL" id="BC013870">
    <property type="protein sequence ID" value="AAH13870.1"/>
    <property type="molecule type" value="mRNA"/>
</dbReference>
<dbReference type="CCDS" id="CCDS966.1">
    <molecule id="Q9H4A5-1"/>
</dbReference>
<dbReference type="RefSeq" id="NP_060648.2">
    <molecule id="Q9H4A5-1"/>
    <property type="nucleotide sequence ID" value="NM_018178.5"/>
</dbReference>
<dbReference type="SMR" id="Q9H4A5"/>
<dbReference type="BioGRID" id="120500">
    <property type="interactions" value="79"/>
</dbReference>
<dbReference type="FunCoup" id="Q9H4A5">
    <property type="interactions" value="980"/>
</dbReference>
<dbReference type="IntAct" id="Q9H4A5">
    <property type="interactions" value="35"/>
</dbReference>
<dbReference type="MINT" id="Q9H4A5"/>
<dbReference type="STRING" id="9606.ENSP00000271732"/>
<dbReference type="iPTMnet" id="Q9H4A5"/>
<dbReference type="PhosphoSitePlus" id="Q9H4A5"/>
<dbReference type="BioMuta" id="GOLPH3L"/>
<dbReference type="DMDM" id="74752638"/>
<dbReference type="jPOST" id="Q9H4A5"/>
<dbReference type="MassIVE" id="Q9H4A5"/>
<dbReference type="PaxDb" id="9606-ENSP00000271732"/>
<dbReference type="PeptideAtlas" id="Q9H4A5"/>
<dbReference type="ProteomicsDB" id="80810">
    <molecule id="Q9H4A5-1"/>
</dbReference>
<dbReference type="Pumba" id="Q9H4A5"/>
<dbReference type="Antibodypedia" id="34036">
    <property type="antibodies" value="129 antibodies from 18 providers"/>
</dbReference>
<dbReference type="DNASU" id="55204"/>
<dbReference type="Ensembl" id="ENST00000271732.8">
    <molecule id="Q9H4A5-1"/>
    <property type="protein sequence ID" value="ENSP00000271732.3"/>
    <property type="gene ID" value="ENSG00000143457.11"/>
</dbReference>
<dbReference type="GeneID" id="55204"/>
<dbReference type="KEGG" id="hsa:55204"/>
<dbReference type="MANE-Select" id="ENST00000271732.8">
    <property type="protein sequence ID" value="ENSP00000271732.3"/>
    <property type="RefSeq nucleotide sequence ID" value="NM_018178.6"/>
    <property type="RefSeq protein sequence ID" value="NP_060648.2"/>
</dbReference>
<dbReference type="UCSC" id="uc001evj.3">
    <molecule id="Q9H4A5-1"/>
    <property type="organism name" value="human"/>
</dbReference>
<dbReference type="AGR" id="HGNC:24882"/>
<dbReference type="CTD" id="55204"/>
<dbReference type="DisGeNET" id="55204"/>
<dbReference type="GeneCards" id="GOLPH3L"/>
<dbReference type="HGNC" id="HGNC:24882">
    <property type="gene designation" value="GOLPH3L"/>
</dbReference>
<dbReference type="HPA" id="ENSG00000143457">
    <property type="expression patterns" value="Low tissue specificity"/>
</dbReference>
<dbReference type="MIM" id="612208">
    <property type="type" value="gene"/>
</dbReference>
<dbReference type="neXtProt" id="NX_Q9H4A5"/>
<dbReference type="OpenTargets" id="ENSG00000143457"/>
<dbReference type="PharmGKB" id="PA134922683"/>
<dbReference type="VEuPathDB" id="HostDB:ENSG00000143457"/>
<dbReference type="eggNOG" id="KOG3983">
    <property type="taxonomic scope" value="Eukaryota"/>
</dbReference>
<dbReference type="GeneTree" id="ENSGT00390000007153"/>
<dbReference type="InParanoid" id="Q9H4A5"/>
<dbReference type="OMA" id="KEXGYTS"/>
<dbReference type="OrthoDB" id="2189106at2759"/>
<dbReference type="PAN-GO" id="Q9H4A5">
    <property type="GO annotations" value="8 GO annotations based on evolutionary models"/>
</dbReference>
<dbReference type="PhylomeDB" id="Q9H4A5"/>
<dbReference type="TreeFam" id="TF314360"/>
<dbReference type="PathwayCommons" id="Q9H4A5"/>
<dbReference type="SignaLink" id="Q9H4A5"/>
<dbReference type="SIGNOR" id="Q9H4A5"/>
<dbReference type="BioGRID-ORCS" id="55204">
    <property type="hits" value="7 hits in 1158 CRISPR screens"/>
</dbReference>
<dbReference type="ChiTaRS" id="GOLPH3L">
    <property type="organism name" value="human"/>
</dbReference>
<dbReference type="GenomeRNAi" id="55204"/>
<dbReference type="Pharos" id="Q9H4A5">
    <property type="development level" value="Tbio"/>
</dbReference>
<dbReference type="PRO" id="PR:Q9H4A5"/>
<dbReference type="Proteomes" id="UP000005640">
    <property type="component" value="Chromosome 1"/>
</dbReference>
<dbReference type="RNAct" id="Q9H4A5">
    <property type="molecule type" value="protein"/>
</dbReference>
<dbReference type="Bgee" id="ENSG00000143457">
    <property type="expression patterns" value="Expressed in corpus epididymis and 206 other cell types or tissues"/>
</dbReference>
<dbReference type="ExpressionAtlas" id="Q9H4A5">
    <property type="expression patterns" value="baseline and differential"/>
</dbReference>
<dbReference type="GO" id="GO:0005829">
    <property type="term" value="C:cytosol"/>
    <property type="evidence" value="ECO:0000314"/>
    <property type="project" value="HPA"/>
</dbReference>
<dbReference type="GO" id="GO:0005794">
    <property type="term" value="C:Golgi apparatus"/>
    <property type="evidence" value="ECO:0000314"/>
    <property type="project" value="HPA"/>
</dbReference>
<dbReference type="GO" id="GO:0031985">
    <property type="term" value="C:Golgi cisterna"/>
    <property type="evidence" value="ECO:0000318"/>
    <property type="project" value="GO_Central"/>
</dbReference>
<dbReference type="GO" id="GO:0032580">
    <property type="term" value="C:Golgi cisterna membrane"/>
    <property type="evidence" value="ECO:0007669"/>
    <property type="project" value="UniProtKB-SubCell"/>
</dbReference>
<dbReference type="GO" id="GO:0000139">
    <property type="term" value="C:Golgi membrane"/>
    <property type="evidence" value="ECO:0000305"/>
    <property type="project" value="UniProtKB"/>
</dbReference>
<dbReference type="GO" id="GO:0005802">
    <property type="term" value="C:trans-Golgi network"/>
    <property type="evidence" value="ECO:0000318"/>
    <property type="project" value="GO_Central"/>
</dbReference>
<dbReference type="GO" id="GO:0032588">
    <property type="term" value="C:trans-Golgi network membrane"/>
    <property type="evidence" value="ECO:0000305"/>
    <property type="project" value="UniProtKB"/>
</dbReference>
<dbReference type="GO" id="GO:0140312">
    <property type="term" value="F:cargo adaptor activity"/>
    <property type="evidence" value="ECO:0000314"/>
    <property type="project" value="FlyBase"/>
</dbReference>
<dbReference type="GO" id="GO:0070273">
    <property type="term" value="F:phosphatidylinositol-4-phosphate binding"/>
    <property type="evidence" value="ECO:0000314"/>
    <property type="project" value="UniProtKB"/>
</dbReference>
<dbReference type="GO" id="GO:0007030">
    <property type="term" value="P:Golgi organization"/>
    <property type="evidence" value="ECO:0000315"/>
    <property type="project" value="UniProtKB"/>
</dbReference>
<dbReference type="GO" id="GO:0043001">
    <property type="term" value="P:Golgi to plasma membrane protein transport"/>
    <property type="evidence" value="ECO:0000318"/>
    <property type="project" value="GO_Central"/>
</dbReference>
<dbReference type="GO" id="GO:0048194">
    <property type="term" value="P:Golgi vesicle budding"/>
    <property type="evidence" value="ECO:0000318"/>
    <property type="project" value="GO_Central"/>
</dbReference>
<dbReference type="GO" id="GO:0050714">
    <property type="term" value="P:positive regulation of protein secretion"/>
    <property type="evidence" value="ECO:0000315"/>
    <property type="project" value="UniProtKB"/>
</dbReference>
<dbReference type="GO" id="GO:0140450">
    <property type="term" value="P:protein targeting to Golgi apparatus"/>
    <property type="evidence" value="ECO:0000315"/>
    <property type="project" value="FlyBase"/>
</dbReference>
<dbReference type="GO" id="GO:0006890">
    <property type="term" value="P:retrograde vesicle-mediated transport, Golgi to endoplasmic reticulum"/>
    <property type="evidence" value="ECO:0000318"/>
    <property type="project" value="GO_Central"/>
</dbReference>
<dbReference type="FunFam" id="1.10.3630.10:FF:000001">
    <property type="entry name" value="Golgi phosphoprotein 3"/>
    <property type="match status" value="1"/>
</dbReference>
<dbReference type="Gene3D" id="1.10.3630.10">
    <property type="entry name" value="yeast vps74-n-term truncation variant domain like"/>
    <property type="match status" value="1"/>
</dbReference>
<dbReference type="InterPro" id="IPR008628">
    <property type="entry name" value="GPP34-like"/>
</dbReference>
<dbReference type="InterPro" id="IPR038261">
    <property type="entry name" value="GPP34-like_sf"/>
</dbReference>
<dbReference type="PANTHER" id="PTHR12704:SF4">
    <property type="entry name" value="GOLGI PHOSPHOPROTEIN 3-LIKE"/>
    <property type="match status" value="1"/>
</dbReference>
<dbReference type="PANTHER" id="PTHR12704">
    <property type="entry name" value="TRANS-GOLGI PROTEIN GMX33"/>
    <property type="match status" value="1"/>
</dbReference>
<dbReference type="Pfam" id="PF05719">
    <property type="entry name" value="GPP34"/>
    <property type="match status" value="1"/>
</dbReference>
<protein>
    <recommendedName>
        <fullName>Golgi phosphoprotein 3-like</fullName>
    </recommendedName>
    <alternativeName>
        <fullName>GPP34-related protein</fullName>
    </alternativeName>
</protein>
<reference key="1">
    <citation type="journal article" date="2001" name="J. Biol. Chem.">
        <title>Proteomics characterization of abundant Golgi membrane proteins.</title>
        <authorList>
            <person name="Bell A.W."/>
            <person name="Ward M.A."/>
            <person name="Blackstock W.P."/>
            <person name="Freeman H.N.M."/>
            <person name="Choudhary J.S."/>
            <person name="Lewis A.P."/>
            <person name="Chotai D."/>
            <person name="Fazel A."/>
            <person name="Gushue J.N."/>
            <person name="Paiement J."/>
            <person name="Palcy S."/>
            <person name="Chevet E."/>
            <person name="Lafreniere-Roula M."/>
            <person name="Solari R."/>
            <person name="Thomas D.Y."/>
            <person name="Rowley A."/>
            <person name="Bergeron J.J.M."/>
        </authorList>
    </citation>
    <scope>NUCLEOTIDE SEQUENCE [MRNA] (ISOFORM 1)</scope>
</reference>
<reference key="2">
    <citation type="journal article" date="2004" name="Nat. Genet.">
        <title>Complete sequencing and characterization of 21,243 full-length human cDNAs.</title>
        <authorList>
            <person name="Ota T."/>
            <person name="Suzuki Y."/>
            <person name="Nishikawa T."/>
            <person name="Otsuki T."/>
            <person name="Sugiyama T."/>
            <person name="Irie R."/>
            <person name="Wakamatsu A."/>
            <person name="Hayashi K."/>
            <person name="Sato H."/>
            <person name="Nagai K."/>
            <person name="Kimura K."/>
            <person name="Makita H."/>
            <person name="Sekine M."/>
            <person name="Obayashi M."/>
            <person name="Nishi T."/>
            <person name="Shibahara T."/>
            <person name="Tanaka T."/>
            <person name="Ishii S."/>
            <person name="Yamamoto J."/>
            <person name="Saito K."/>
            <person name="Kawai Y."/>
            <person name="Isono Y."/>
            <person name="Nakamura Y."/>
            <person name="Nagahari K."/>
            <person name="Murakami K."/>
            <person name="Yasuda T."/>
            <person name="Iwayanagi T."/>
            <person name="Wagatsuma M."/>
            <person name="Shiratori A."/>
            <person name="Sudo H."/>
            <person name="Hosoiri T."/>
            <person name="Kaku Y."/>
            <person name="Kodaira H."/>
            <person name="Kondo H."/>
            <person name="Sugawara M."/>
            <person name="Takahashi M."/>
            <person name="Kanda K."/>
            <person name="Yokoi T."/>
            <person name="Furuya T."/>
            <person name="Kikkawa E."/>
            <person name="Omura Y."/>
            <person name="Abe K."/>
            <person name="Kamihara K."/>
            <person name="Katsuta N."/>
            <person name="Sato K."/>
            <person name="Tanikawa M."/>
            <person name="Yamazaki M."/>
            <person name="Ninomiya K."/>
            <person name="Ishibashi T."/>
            <person name="Yamashita H."/>
            <person name="Murakawa K."/>
            <person name="Fujimori K."/>
            <person name="Tanai H."/>
            <person name="Kimata M."/>
            <person name="Watanabe M."/>
            <person name="Hiraoka S."/>
            <person name="Chiba Y."/>
            <person name="Ishida S."/>
            <person name="Ono Y."/>
            <person name="Takiguchi S."/>
            <person name="Watanabe S."/>
            <person name="Yosida M."/>
            <person name="Hotuta T."/>
            <person name="Kusano J."/>
            <person name="Kanehori K."/>
            <person name="Takahashi-Fujii A."/>
            <person name="Hara H."/>
            <person name="Tanase T.-O."/>
            <person name="Nomura Y."/>
            <person name="Togiya S."/>
            <person name="Komai F."/>
            <person name="Hara R."/>
            <person name="Takeuchi K."/>
            <person name="Arita M."/>
            <person name="Imose N."/>
            <person name="Musashino K."/>
            <person name="Yuuki H."/>
            <person name="Oshima A."/>
            <person name="Sasaki N."/>
            <person name="Aotsuka S."/>
            <person name="Yoshikawa Y."/>
            <person name="Matsunawa H."/>
            <person name="Ichihara T."/>
            <person name="Shiohata N."/>
            <person name="Sano S."/>
            <person name="Moriya S."/>
            <person name="Momiyama H."/>
            <person name="Satoh N."/>
            <person name="Takami S."/>
            <person name="Terashima Y."/>
            <person name="Suzuki O."/>
            <person name="Nakagawa S."/>
            <person name="Senoh A."/>
            <person name="Mizoguchi H."/>
            <person name="Goto Y."/>
            <person name="Shimizu F."/>
            <person name="Wakebe H."/>
            <person name="Hishigaki H."/>
            <person name="Watanabe T."/>
            <person name="Sugiyama A."/>
            <person name="Takemoto M."/>
            <person name="Kawakami B."/>
            <person name="Yamazaki M."/>
            <person name="Watanabe K."/>
            <person name="Kumagai A."/>
            <person name="Itakura S."/>
            <person name="Fukuzumi Y."/>
            <person name="Fujimori Y."/>
            <person name="Komiyama M."/>
            <person name="Tashiro H."/>
            <person name="Tanigami A."/>
            <person name="Fujiwara T."/>
            <person name="Ono T."/>
            <person name="Yamada K."/>
            <person name="Fujii Y."/>
            <person name="Ozaki K."/>
            <person name="Hirao M."/>
            <person name="Ohmori Y."/>
            <person name="Kawabata A."/>
            <person name="Hikiji T."/>
            <person name="Kobatake N."/>
            <person name="Inagaki H."/>
            <person name="Ikema Y."/>
            <person name="Okamoto S."/>
            <person name="Okitani R."/>
            <person name="Kawakami T."/>
            <person name="Noguchi S."/>
            <person name="Itoh T."/>
            <person name="Shigeta K."/>
            <person name="Senba T."/>
            <person name="Matsumura K."/>
            <person name="Nakajima Y."/>
            <person name="Mizuno T."/>
            <person name="Morinaga M."/>
            <person name="Sasaki M."/>
            <person name="Togashi T."/>
            <person name="Oyama M."/>
            <person name="Hata H."/>
            <person name="Watanabe M."/>
            <person name="Komatsu T."/>
            <person name="Mizushima-Sugano J."/>
            <person name="Satoh T."/>
            <person name="Shirai Y."/>
            <person name="Takahashi Y."/>
            <person name="Nakagawa K."/>
            <person name="Okumura K."/>
            <person name="Nagase T."/>
            <person name="Nomura N."/>
            <person name="Kikuchi H."/>
            <person name="Masuho Y."/>
            <person name="Yamashita R."/>
            <person name="Nakai K."/>
            <person name="Yada T."/>
            <person name="Nakamura Y."/>
            <person name="Ohara O."/>
            <person name="Isogai T."/>
            <person name="Sugano S."/>
        </authorList>
    </citation>
    <scope>NUCLEOTIDE SEQUENCE [LARGE SCALE MRNA] (ISOFORMS 1 AND 2)</scope>
    <source>
        <tissue>Placenta</tissue>
    </source>
</reference>
<reference key="3">
    <citation type="journal article" date="2006" name="Nature">
        <title>The DNA sequence and biological annotation of human chromosome 1.</title>
        <authorList>
            <person name="Gregory S.G."/>
            <person name="Barlow K.F."/>
            <person name="McLay K.E."/>
            <person name="Kaul R."/>
            <person name="Swarbreck D."/>
            <person name="Dunham A."/>
            <person name="Scott C.E."/>
            <person name="Howe K.L."/>
            <person name="Woodfine K."/>
            <person name="Spencer C.C.A."/>
            <person name="Jones M.C."/>
            <person name="Gillson C."/>
            <person name="Searle S."/>
            <person name="Zhou Y."/>
            <person name="Kokocinski F."/>
            <person name="McDonald L."/>
            <person name="Evans R."/>
            <person name="Phillips K."/>
            <person name="Atkinson A."/>
            <person name="Cooper R."/>
            <person name="Jones C."/>
            <person name="Hall R.E."/>
            <person name="Andrews T.D."/>
            <person name="Lloyd C."/>
            <person name="Ainscough R."/>
            <person name="Almeida J.P."/>
            <person name="Ambrose K.D."/>
            <person name="Anderson F."/>
            <person name="Andrew R.W."/>
            <person name="Ashwell R.I.S."/>
            <person name="Aubin K."/>
            <person name="Babbage A.K."/>
            <person name="Bagguley C.L."/>
            <person name="Bailey J."/>
            <person name="Beasley H."/>
            <person name="Bethel G."/>
            <person name="Bird C.P."/>
            <person name="Bray-Allen S."/>
            <person name="Brown J.Y."/>
            <person name="Brown A.J."/>
            <person name="Buckley D."/>
            <person name="Burton J."/>
            <person name="Bye J."/>
            <person name="Carder C."/>
            <person name="Chapman J.C."/>
            <person name="Clark S.Y."/>
            <person name="Clarke G."/>
            <person name="Clee C."/>
            <person name="Cobley V."/>
            <person name="Collier R.E."/>
            <person name="Corby N."/>
            <person name="Coville G.J."/>
            <person name="Davies J."/>
            <person name="Deadman R."/>
            <person name="Dunn M."/>
            <person name="Earthrowl M."/>
            <person name="Ellington A.G."/>
            <person name="Errington H."/>
            <person name="Frankish A."/>
            <person name="Frankland J."/>
            <person name="French L."/>
            <person name="Garner P."/>
            <person name="Garnett J."/>
            <person name="Gay L."/>
            <person name="Ghori M.R.J."/>
            <person name="Gibson R."/>
            <person name="Gilby L.M."/>
            <person name="Gillett W."/>
            <person name="Glithero R.J."/>
            <person name="Grafham D.V."/>
            <person name="Griffiths C."/>
            <person name="Griffiths-Jones S."/>
            <person name="Grocock R."/>
            <person name="Hammond S."/>
            <person name="Harrison E.S.I."/>
            <person name="Hart E."/>
            <person name="Haugen E."/>
            <person name="Heath P.D."/>
            <person name="Holmes S."/>
            <person name="Holt K."/>
            <person name="Howden P.J."/>
            <person name="Hunt A.R."/>
            <person name="Hunt S.E."/>
            <person name="Hunter G."/>
            <person name="Isherwood J."/>
            <person name="James R."/>
            <person name="Johnson C."/>
            <person name="Johnson D."/>
            <person name="Joy A."/>
            <person name="Kay M."/>
            <person name="Kershaw J.K."/>
            <person name="Kibukawa M."/>
            <person name="Kimberley A.M."/>
            <person name="King A."/>
            <person name="Knights A.J."/>
            <person name="Lad H."/>
            <person name="Laird G."/>
            <person name="Lawlor S."/>
            <person name="Leongamornlert D.A."/>
            <person name="Lloyd D.M."/>
            <person name="Loveland J."/>
            <person name="Lovell J."/>
            <person name="Lush M.J."/>
            <person name="Lyne R."/>
            <person name="Martin S."/>
            <person name="Mashreghi-Mohammadi M."/>
            <person name="Matthews L."/>
            <person name="Matthews N.S.W."/>
            <person name="McLaren S."/>
            <person name="Milne S."/>
            <person name="Mistry S."/>
            <person name="Moore M.J.F."/>
            <person name="Nickerson T."/>
            <person name="O'Dell C.N."/>
            <person name="Oliver K."/>
            <person name="Palmeiri A."/>
            <person name="Palmer S.A."/>
            <person name="Parker A."/>
            <person name="Patel D."/>
            <person name="Pearce A.V."/>
            <person name="Peck A.I."/>
            <person name="Pelan S."/>
            <person name="Phelps K."/>
            <person name="Phillimore B.J."/>
            <person name="Plumb R."/>
            <person name="Rajan J."/>
            <person name="Raymond C."/>
            <person name="Rouse G."/>
            <person name="Saenphimmachak C."/>
            <person name="Sehra H.K."/>
            <person name="Sheridan E."/>
            <person name="Shownkeen R."/>
            <person name="Sims S."/>
            <person name="Skuce C.D."/>
            <person name="Smith M."/>
            <person name="Steward C."/>
            <person name="Subramanian S."/>
            <person name="Sycamore N."/>
            <person name="Tracey A."/>
            <person name="Tromans A."/>
            <person name="Van Helmond Z."/>
            <person name="Wall M."/>
            <person name="Wallis J.M."/>
            <person name="White S."/>
            <person name="Whitehead S.L."/>
            <person name="Wilkinson J.E."/>
            <person name="Willey D.L."/>
            <person name="Williams H."/>
            <person name="Wilming L."/>
            <person name="Wray P.W."/>
            <person name="Wu Z."/>
            <person name="Coulson A."/>
            <person name="Vaudin M."/>
            <person name="Sulston J.E."/>
            <person name="Durbin R.M."/>
            <person name="Hubbard T."/>
            <person name="Wooster R."/>
            <person name="Dunham I."/>
            <person name="Carter N.P."/>
            <person name="McVean G."/>
            <person name="Ross M.T."/>
            <person name="Harrow J."/>
            <person name="Olson M.V."/>
            <person name="Beck S."/>
            <person name="Rogers J."/>
            <person name="Bentley D.R."/>
        </authorList>
    </citation>
    <scope>NUCLEOTIDE SEQUENCE [LARGE SCALE GENOMIC DNA]</scope>
</reference>
<reference key="4">
    <citation type="submission" date="2005-09" db="EMBL/GenBank/DDBJ databases">
        <authorList>
            <person name="Mural R.J."/>
            <person name="Istrail S."/>
            <person name="Sutton G.G."/>
            <person name="Florea L."/>
            <person name="Halpern A.L."/>
            <person name="Mobarry C.M."/>
            <person name="Lippert R."/>
            <person name="Walenz B."/>
            <person name="Shatkay H."/>
            <person name="Dew I."/>
            <person name="Miller J.R."/>
            <person name="Flanigan M.J."/>
            <person name="Edwards N.J."/>
            <person name="Bolanos R."/>
            <person name="Fasulo D."/>
            <person name="Halldorsson B.V."/>
            <person name="Hannenhalli S."/>
            <person name="Turner R."/>
            <person name="Yooseph S."/>
            <person name="Lu F."/>
            <person name="Nusskern D.R."/>
            <person name="Shue B.C."/>
            <person name="Zheng X.H."/>
            <person name="Zhong F."/>
            <person name="Delcher A.L."/>
            <person name="Huson D.H."/>
            <person name="Kravitz S.A."/>
            <person name="Mouchard L."/>
            <person name="Reinert K."/>
            <person name="Remington K.A."/>
            <person name="Clark A.G."/>
            <person name="Waterman M.S."/>
            <person name="Eichler E.E."/>
            <person name="Adams M.D."/>
            <person name="Hunkapiller M.W."/>
            <person name="Myers E.W."/>
            <person name="Venter J.C."/>
        </authorList>
    </citation>
    <scope>NUCLEOTIDE SEQUENCE [LARGE SCALE GENOMIC DNA]</scope>
</reference>
<reference key="5">
    <citation type="journal article" date="2004" name="Genome Res.">
        <title>The status, quality, and expansion of the NIH full-length cDNA project: the Mammalian Gene Collection (MGC).</title>
        <authorList>
            <consortium name="The MGC Project Team"/>
        </authorList>
    </citation>
    <scope>NUCLEOTIDE SEQUENCE [LARGE SCALE MRNA] (ISOFORM 1)</scope>
    <source>
        <tissue>Ovary</tissue>
    </source>
</reference>
<reference key="6">
    <citation type="journal article" date="2011" name="BMC Syst. Biol.">
        <title>Initial characterization of the human central proteome.</title>
        <authorList>
            <person name="Burkard T.R."/>
            <person name="Planyavsky M."/>
            <person name="Kaupe I."/>
            <person name="Breitwieser F.P."/>
            <person name="Buerckstuemmer T."/>
            <person name="Bennett K.L."/>
            <person name="Superti-Furga G."/>
            <person name="Colinge J."/>
        </authorList>
    </citation>
    <scope>IDENTIFICATION BY MASS SPECTROMETRY [LARGE SCALE ANALYSIS]</scope>
</reference>
<reference key="7">
    <citation type="journal article" date="2012" name="Traffic">
        <title>A conserved N-terminal arginine-motif in GOLPH3-family proteins mediates binding to coatomer.</title>
        <authorList>
            <person name="Tu L."/>
            <person name="Chen L."/>
            <person name="Banfield D.K."/>
        </authorList>
    </citation>
    <scope>MUTAGENESIS OF 7-ARG--ARG-10</scope>
    <scope>COATOMER-BINDING</scope>
    <scope>INTERACTION WITH ARF1</scope>
</reference>
<reference key="8">
    <citation type="journal article" date="2013" name="J. Proteome Res.">
        <title>Toward a comprehensive characterization of a human cancer cell phosphoproteome.</title>
        <authorList>
            <person name="Zhou H."/>
            <person name="Di Palma S."/>
            <person name="Preisinger C."/>
            <person name="Peng M."/>
            <person name="Polat A.N."/>
            <person name="Heck A.J."/>
            <person name="Mohammed S."/>
        </authorList>
    </citation>
    <scope>PHOSPHORYLATION [LARGE SCALE ANALYSIS] AT SER-112</scope>
    <scope>IDENTIFICATION BY MASS SPECTROMETRY [LARGE SCALE ANALYSIS]</scope>
    <source>
        <tissue>Cervix carcinoma</tissue>
        <tissue>Erythroleukemia</tissue>
    </source>
</reference>
<reference key="9">
    <citation type="journal article" date="2013" name="Mol. Biol. Cell">
        <title>GOLPH3L antagonizes GOLPH3 to determine Golgi morphology.</title>
        <authorList>
            <person name="Ng M.M."/>
            <person name="Dippold H.C."/>
            <person name="Buschman M.D."/>
            <person name="Noakes C.J."/>
            <person name="Field S.J."/>
        </authorList>
    </citation>
    <scope>FUNCTION</scope>
    <scope>LIPID-BINDING</scope>
    <scope>SUBCELLULAR LOCATION</scope>
</reference>
<reference key="10">
    <citation type="journal article" date="2015" name="Proteomics">
        <title>N-terminome analysis of the human mitochondrial proteome.</title>
        <authorList>
            <person name="Vaca Jacome A.S."/>
            <person name="Rabilloud T."/>
            <person name="Schaeffer-Reiss C."/>
            <person name="Rompais M."/>
            <person name="Ayoub D."/>
            <person name="Lane L."/>
            <person name="Bairoch A."/>
            <person name="Van Dorsselaer A."/>
            <person name="Carapito C."/>
        </authorList>
    </citation>
    <scope>IDENTIFICATION BY MASS SPECTROMETRY [LARGE SCALE ANALYSIS]</scope>
</reference>
<accession>Q9H4A5</accession>
<accession>B1AN09</accession>
<accession>B7Z6N3</accession>
<accession>Q9NVK0</accession>